<comment type="function">
    <text evidence="1">The alpha subunit is responsible for the aldol cleavage of indoleglycerol phosphate to indole and glyceraldehyde 3-phosphate.</text>
</comment>
<comment type="catalytic activity">
    <reaction evidence="1">
        <text>(1S,2R)-1-C-(indol-3-yl)glycerol 3-phosphate + L-serine = D-glyceraldehyde 3-phosphate + L-tryptophan + H2O</text>
        <dbReference type="Rhea" id="RHEA:10532"/>
        <dbReference type="ChEBI" id="CHEBI:15377"/>
        <dbReference type="ChEBI" id="CHEBI:33384"/>
        <dbReference type="ChEBI" id="CHEBI:57912"/>
        <dbReference type="ChEBI" id="CHEBI:58866"/>
        <dbReference type="ChEBI" id="CHEBI:59776"/>
        <dbReference type="EC" id="4.2.1.20"/>
    </reaction>
</comment>
<comment type="pathway">
    <text evidence="1">Amino-acid biosynthesis; L-tryptophan biosynthesis; L-tryptophan from chorismate: step 5/5.</text>
</comment>
<comment type="subunit">
    <text evidence="1">Tetramer of two alpha and two beta chains.</text>
</comment>
<comment type="similarity">
    <text evidence="1">Belongs to the TrpA family.</text>
</comment>
<gene>
    <name evidence="1" type="primary">trpA</name>
    <name type="ordered locus">RHE_CH00022</name>
</gene>
<evidence type="ECO:0000255" key="1">
    <source>
        <dbReference type="HAMAP-Rule" id="MF_00131"/>
    </source>
</evidence>
<accession>Q2KE81</accession>
<name>TRPA_RHIEC</name>
<proteinExistence type="inferred from homology"/>
<keyword id="KW-0028">Amino-acid biosynthesis</keyword>
<keyword id="KW-0057">Aromatic amino acid biosynthesis</keyword>
<keyword id="KW-0456">Lyase</keyword>
<keyword id="KW-1185">Reference proteome</keyword>
<keyword id="KW-0822">Tryptophan biosynthesis</keyword>
<sequence>MTARMDKRFAELKAEGRPALVTYFMGGDPDYDTSLGIMKALPEAGSDIIELGMPFSDPMADGPAIQLAGQRALKGGQTLKKTLQLAADFRKTNDLTPIVMMGYYNPIYIYGVEKFLDDALAAGIDGLIVVDLPPEMDDELCIPAIRKGINFIRLATPTTDEKRLPTVLKNTSGFVYYVSMNGITGSALPDPSLVSGAVQRIKQHTELPVCVGFGVKTAEHAKVIGGSADGVVVGTAIVNQVATSLTKDGKATPDTVQAVATLVRGLSSGARSARLVAAE</sequence>
<organism>
    <name type="scientific">Rhizobium etli (strain ATCC 51251 / DSM 11541 / JCM 21823 / NBRC 15573 / CFN 42)</name>
    <dbReference type="NCBI Taxonomy" id="347834"/>
    <lineage>
        <taxon>Bacteria</taxon>
        <taxon>Pseudomonadati</taxon>
        <taxon>Pseudomonadota</taxon>
        <taxon>Alphaproteobacteria</taxon>
        <taxon>Hyphomicrobiales</taxon>
        <taxon>Rhizobiaceae</taxon>
        <taxon>Rhizobium/Agrobacterium group</taxon>
        <taxon>Rhizobium</taxon>
    </lineage>
</organism>
<protein>
    <recommendedName>
        <fullName evidence="1">Tryptophan synthase alpha chain</fullName>
        <ecNumber evidence="1">4.2.1.20</ecNumber>
    </recommendedName>
</protein>
<reference key="1">
    <citation type="journal article" date="2006" name="Proc. Natl. Acad. Sci. U.S.A.">
        <title>The partitioned Rhizobium etli genome: genetic and metabolic redundancy in seven interacting replicons.</title>
        <authorList>
            <person name="Gonzalez V."/>
            <person name="Santamaria R.I."/>
            <person name="Bustos P."/>
            <person name="Hernandez-Gonzalez I."/>
            <person name="Medrano-Soto A."/>
            <person name="Moreno-Hagelsieb G."/>
            <person name="Janga S.C."/>
            <person name="Ramirez M.A."/>
            <person name="Jimenez-Jacinto V."/>
            <person name="Collado-Vides J."/>
            <person name="Davila G."/>
        </authorList>
    </citation>
    <scope>NUCLEOTIDE SEQUENCE [LARGE SCALE GENOMIC DNA]</scope>
    <source>
        <strain>ATCC 51251 / DSM 11541 / JCM 21823 / NBRC 15573 / CFN 42</strain>
    </source>
</reference>
<feature type="chain" id="PRO_1000018265" description="Tryptophan synthase alpha chain">
    <location>
        <begin position="1"/>
        <end position="279"/>
    </location>
</feature>
<feature type="active site" description="Proton acceptor" evidence="1">
    <location>
        <position position="50"/>
    </location>
</feature>
<feature type="active site" description="Proton acceptor" evidence="1">
    <location>
        <position position="61"/>
    </location>
</feature>
<dbReference type="EC" id="4.2.1.20" evidence="1"/>
<dbReference type="EMBL" id="CP000133">
    <property type="protein sequence ID" value="ABC88855.1"/>
    <property type="molecule type" value="Genomic_DNA"/>
</dbReference>
<dbReference type="RefSeq" id="WP_011423427.1">
    <property type="nucleotide sequence ID" value="NC_007761.1"/>
</dbReference>
<dbReference type="SMR" id="Q2KE81"/>
<dbReference type="KEGG" id="ret:RHE_CH00022"/>
<dbReference type="eggNOG" id="COG0159">
    <property type="taxonomic scope" value="Bacteria"/>
</dbReference>
<dbReference type="HOGENOM" id="CLU_016734_0_0_5"/>
<dbReference type="OrthoDB" id="9804578at2"/>
<dbReference type="UniPathway" id="UPA00035">
    <property type="reaction ID" value="UER00044"/>
</dbReference>
<dbReference type="Proteomes" id="UP000001936">
    <property type="component" value="Chromosome"/>
</dbReference>
<dbReference type="GO" id="GO:0005829">
    <property type="term" value="C:cytosol"/>
    <property type="evidence" value="ECO:0007669"/>
    <property type="project" value="TreeGrafter"/>
</dbReference>
<dbReference type="GO" id="GO:0004834">
    <property type="term" value="F:tryptophan synthase activity"/>
    <property type="evidence" value="ECO:0007669"/>
    <property type="project" value="UniProtKB-UniRule"/>
</dbReference>
<dbReference type="CDD" id="cd04724">
    <property type="entry name" value="Tryptophan_synthase_alpha"/>
    <property type="match status" value="1"/>
</dbReference>
<dbReference type="FunFam" id="3.20.20.70:FF:000037">
    <property type="entry name" value="Tryptophan synthase alpha chain"/>
    <property type="match status" value="1"/>
</dbReference>
<dbReference type="Gene3D" id="3.20.20.70">
    <property type="entry name" value="Aldolase class I"/>
    <property type="match status" value="1"/>
</dbReference>
<dbReference type="HAMAP" id="MF_00131">
    <property type="entry name" value="Trp_synth_alpha"/>
    <property type="match status" value="1"/>
</dbReference>
<dbReference type="InterPro" id="IPR013785">
    <property type="entry name" value="Aldolase_TIM"/>
</dbReference>
<dbReference type="InterPro" id="IPR011060">
    <property type="entry name" value="RibuloseP-bd_barrel"/>
</dbReference>
<dbReference type="InterPro" id="IPR018204">
    <property type="entry name" value="Trp_synthase_alpha_AS"/>
</dbReference>
<dbReference type="InterPro" id="IPR002028">
    <property type="entry name" value="Trp_synthase_suA"/>
</dbReference>
<dbReference type="NCBIfam" id="TIGR00262">
    <property type="entry name" value="trpA"/>
    <property type="match status" value="1"/>
</dbReference>
<dbReference type="PANTHER" id="PTHR43406:SF1">
    <property type="entry name" value="TRYPTOPHAN SYNTHASE ALPHA CHAIN, CHLOROPLASTIC"/>
    <property type="match status" value="1"/>
</dbReference>
<dbReference type="PANTHER" id="PTHR43406">
    <property type="entry name" value="TRYPTOPHAN SYNTHASE, ALPHA CHAIN"/>
    <property type="match status" value="1"/>
</dbReference>
<dbReference type="Pfam" id="PF00290">
    <property type="entry name" value="Trp_syntA"/>
    <property type="match status" value="1"/>
</dbReference>
<dbReference type="SUPFAM" id="SSF51366">
    <property type="entry name" value="Ribulose-phoshate binding barrel"/>
    <property type="match status" value="1"/>
</dbReference>
<dbReference type="PROSITE" id="PS00167">
    <property type="entry name" value="TRP_SYNTHASE_ALPHA"/>
    <property type="match status" value="1"/>
</dbReference>